<dbReference type="EMBL" id="CR936503">
    <property type="protein sequence ID" value="CAI54453.1"/>
    <property type="molecule type" value="Genomic_DNA"/>
</dbReference>
<dbReference type="RefSeq" id="WP_011373867.1">
    <property type="nucleotide sequence ID" value="NC_007576.1"/>
</dbReference>
<dbReference type="STRING" id="314315.LCA_0156"/>
<dbReference type="KEGG" id="lsa:LCA_0156"/>
<dbReference type="eggNOG" id="COG3681">
    <property type="taxonomic scope" value="Bacteria"/>
</dbReference>
<dbReference type="HOGENOM" id="CLU_051840_0_0_9"/>
<dbReference type="OrthoDB" id="41906at2"/>
<dbReference type="Proteomes" id="UP000002707">
    <property type="component" value="Chromosome"/>
</dbReference>
<dbReference type="GO" id="GO:0080146">
    <property type="term" value="F:L-cysteine desulfhydrase activity"/>
    <property type="evidence" value="ECO:0007669"/>
    <property type="project" value="TreeGrafter"/>
</dbReference>
<dbReference type="GO" id="GO:0019450">
    <property type="term" value="P:L-cysteine catabolic process to pyruvate"/>
    <property type="evidence" value="ECO:0007669"/>
    <property type="project" value="TreeGrafter"/>
</dbReference>
<dbReference type="HAMAP" id="MF_01845">
    <property type="entry name" value="UPF0597"/>
    <property type="match status" value="1"/>
</dbReference>
<dbReference type="InterPro" id="IPR005130">
    <property type="entry name" value="Ser_deHydtase-like_asu"/>
</dbReference>
<dbReference type="InterPro" id="IPR021144">
    <property type="entry name" value="UPF0597"/>
</dbReference>
<dbReference type="PANTHER" id="PTHR30501">
    <property type="entry name" value="UPF0597 PROTEIN YHAM"/>
    <property type="match status" value="1"/>
</dbReference>
<dbReference type="PANTHER" id="PTHR30501:SF2">
    <property type="entry name" value="UPF0597 PROTEIN YHAM"/>
    <property type="match status" value="1"/>
</dbReference>
<dbReference type="Pfam" id="PF03313">
    <property type="entry name" value="SDH_alpha"/>
    <property type="match status" value="1"/>
</dbReference>
<dbReference type="PIRSF" id="PIRSF006054">
    <property type="entry name" value="UCP006054"/>
    <property type="match status" value="1"/>
</dbReference>
<comment type="similarity">
    <text evidence="1">Belongs to the UPF0597 family.</text>
</comment>
<name>Y156_LATSS</name>
<organism>
    <name type="scientific">Latilactobacillus sakei subsp. sakei (strain 23K)</name>
    <name type="common">Lactobacillus sakei subsp. sakei</name>
    <dbReference type="NCBI Taxonomy" id="314315"/>
    <lineage>
        <taxon>Bacteria</taxon>
        <taxon>Bacillati</taxon>
        <taxon>Bacillota</taxon>
        <taxon>Bacilli</taxon>
        <taxon>Lactobacillales</taxon>
        <taxon>Lactobacillaceae</taxon>
        <taxon>Latilactobacillus</taxon>
    </lineage>
</organism>
<feature type="chain" id="PRO_0000339832" description="UPF0597 protein LCA_0156">
    <location>
        <begin position="1"/>
        <end position="431"/>
    </location>
</feature>
<proteinExistence type="inferred from homology"/>
<reference key="1">
    <citation type="journal article" date="2005" name="Nat. Biotechnol.">
        <title>The complete genome sequence of the meat-borne lactic acid bacterium Lactobacillus sakei 23K.</title>
        <authorList>
            <person name="Chaillou S."/>
            <person name="Champomier-Verges M.-C."/>
            <person name="Cornet M."/>
            <person name="Crutz-Le Coq A.-M."/>
            <person name="Dudez A.-M."/>
            <person name="Martin V."/>
            <person name="Beaufils S."/>
            <person name="Darbon-Rongere E."/>
            <person name="Bossy R."/>
            <person name="Loux V."/>
            <person name="Zagorec M."/>
        </authorList>
    </citation>
    <scope>NUCLEOTIDE SEQUENCE [LARGE SCALE GENOMIC DNA]</scope>
    <source>
        <strain>23K</strain>
    </source>
</reference>
<protein>
    <recommendedName>
        <fullName evidence="1">UPF0597 protein LCA_0156</fullName>
    </recommendedName>
</protein>
<gene>
    <name type="ordered locus">LCA_0156</name>
</gene>
<keyword id="KW-1185">Reference proteome</keyword>
<accession>Q38ZC4</accession>
<evidence type="ECO:0000255" key="1">
    <source>
        <dbReference type="HAMAP-Rule" id="MF_01845"/>
    </source>
</evidence>
<sequence>MSLQSKHFIQALKNGVVPATGCTEPIAVAFGAATCMAQLTNREIQAIEVHVSPNVMKNALAVMVPGTGEPGLLVAAAAGAIAGDATVGLSVIEGLRATDLPTILDLAHSGKVTAKTALVPDDLYVEVTIKDLENTVTVAIAGSHTNIFSLKKDDQILIDHPRPAAHASSESKQFLQTMNFKAVWDFAMNEPLEHLRFMKEAHTLNLALAQDGFTHDYGLQLGQSINGAKRNHFGSGTENDLGNRMIAYAAAASDARMGGAQLPAMSNSGSGNQGITATIPVSVAADAVQATEEQLIRAQALSHLTALYIHSFLPVLSAFCATDSAAMGAAAGVVYLYDGTYEDACHAIQNMAGDAAGMICDGAGCACAMKVATAVSSMYRGVNLALQGIVIPNSNGIVCPTIDETIHGIGRLGTEGLRETDPVILDIMLNK</sequence>